<gene>
    <name evidence="1" type="primary">purM</name>
    <name type="ordered locus">MGAS2096_Spy0026</name>
</gene>
<comment type="catalytic activity">
    <reaction evidence="1">
        <text>2-formamido-N(1)-(5-O-phospho-beta-D-ribosyl)acetamidine + ATP = 5-amino-1-(5-phospho-beta-D-ribosyl)imidazole + ADP + phosphate + H(+)</text>
        <dbReference type="Rhea" id="RHEA:23032"/>
        <dbReference type="ChEBI" id="CHEBI:15378"/>
        <dbReference type="ChEBI" id="CHEBI:30616"/>
        <dbReference type="ChEBI" id="CHEBI:43474"/>
        <dbReference type="ChEBI" id="CHEBI:137981"/>
        <dbReference type="ChEBI" id="CHEBI:147287"/>
        <dbReference type="ChEBI" id="CHEBI:456216"/>
        <dbReference type="EC" id="6.3.3.1"/>
    </reaction>
</comment>
<comment type="pathway">
    <text evidence="1">Purine metabolism; IMP biosynthesis via de novo pathway; 5-amino-1-(5-phospho-D-ribosyl)imidazole from N(2)-formyl-N(1)-(5-phospho-D-ribosyl)glycinamide: step 2/2.</text>
</comment>
<comment type="subcellular location">
    <subcellularLocation>
        <location evidence="1">Cytoplasm</location>
    </subcellularLocation>
</comment>
<comment type="similarity">
    <text evidence="1">Belongs to the AIR synthase family.</text>
</comment>
<proteinExistence type="inferred from homology"/>
<name>PUR5_STRPB</name>
<accession>Q1JE80</accession>
<keyword id="KW-0067">ATP-binding</keyword>
<keyword id="KW-0963">Cytoplasm</keyword>
<keyword id="KW-0436">Ligase</keyword>
<keyword id="KW-0547">Nucleotide-binding</keyword>
<keyword id="KW-0658">Purine biosynthesis</keyword>
<sequence length="340" mass="36564">MSEKNAYAKSGVDVEAGYEVVERIKKHVARTERAGVMGALGGFGGMFDLSKTGVREPVLVSGTDGVGTKLMLAIKYDKHDTIGQDCVAMCVNDIIAAGAEPLYFLDYVATGKNNPVKFEEVVSGVAEGCVQAGAALIGGETAEMPGMYGEDDYDLAGFAVGVAEKSQLIDGSKVKEGDILLGLASSGIHSNGYSLVRRVFADYTGKELLPELEGKQLKDVLLEPTRIYVRAALPLIKEELVNGIGHITGGGFIENVPRMFADDLAAEIDEDKVPVLPIFKALEKYGDIKHEEMFEIFNMGVGLMLAVSPENVNRVKELLDEPVYEIGRIIKKADDSVVIK</sequence>
<feature type="chain" id="PRO_0000258413" description="Phosphoribosylformylglycinamidine cyclo-ligase">
    <location>
        <begin position="1"/>
        <end position="340"/>
    </location>
</feature>
<dbReference type="EC" id="6.3.3.1" evidence="1"/>
<dbReference type="EMBL" id="CP000261">
    <property type="protein sequence ID" value="ABF35078.1"/>
    <property type="molecule type" value="Genomic_DNA"/>
</dbReference>
<dbReference type="SMR" id="Q1JE80"/>
<dbReference type="KEGG" id="spj:MGAS2096_Spy0026"/>
<dbReference type="HOGENOM" id="CLU_047116_0_0_9"/>
<dbReference type="UniPathway" id="UPA00074">
    <property type="reaction ID" value="UER00129"/>
</dbReference>
<dbReference type="GO" id="GO:0005829">
    <property type="term" value="C:cytosol"/>
    <property type="evidence" value="ECO:0007669"/>
    <property type="project" value="TreeGrafter"/>
</dbReference>
<dbReference type="GO" id="GO:0005524">
    <property type="term" value="F:ATP binding"/>
    <property type="evidence" value="ECO:0007669"/>
    <property type="project" value="UniProtKB-KW"/>
</dbReference>
<dbReference type="GO" id="GO:0004637">
    <property type="term" value="F:phosphoribosylamine-glycine ligase activity"/>
    <property type="evidence" value="ECO:0007669"/>
    <property type="project" value="TreeGrafter"/>
</dbReference>
<dbReference type="GO" id="GO:0004641">
    <property type="term" value="F:phosphoribosylformylglycinamidine cyclo-ligase activity"/>
    <property type="evidence" value="ECO:0007669"/>
    <property type="project" value="UniProtKB-UniRule"/>
</dbReference>
<dbReference type="GO" id="GO:0006189">
    <property type="term" value="P:'de novo' IMP biosynthetic process"/>
    <property type="evidence" value="ECO:0007669"/>
    <property type="project" value="UniProtKB-UniRule"/>
</dbReference>
<dbReference type="GO" id="GO:0046084">
    <property type="term" value="P:adenine biosynthetic process"/>
    <property type="evidence" value="ECO:0007669"/>
    <property type="project" value="TreeGrafter"/>
</dbReference>
<dbReference type="CDD" id="cd02196">
    <property type="entry name" value="PurM"/>
    <property type="match status" value="1"/>
</dbReference>
<dbReference type="FunFam" id="3.30.1330.10:FF:000001">
    <property type="entry name" value="Phosphoribosylformylglycinamidine cyclo-ligase"/>
    <property type="match status" value="1"/>
</dbReference>
<dbReference type="FunFam" id="3.90.650.10:FF:000011">
    <property type="entry name" value="Phosphoribosylformylglycinamidine cyclo-ligase"/>
    <property type="match status" value="1"/>
</dbReference>
<dbReference type="Gene3D" id="3.90.650.10">
    <property type="entry name" value="PurM-like C-terminal domain"/>
    <property type="match status" value="1"/>
</dbReference>
<dbReference type="Gene3D" id="3.30.1330.10">
    <property type="entry name" value="PurM-like, N-terminal domain"/>
    <property type="match status" value="1"/>
</dbReference>
<dbReference type="HAMAP" id="MF_00741">
    <property type="entry name" value="AIRS"/>
    <property type="match status" value="1"/>
</dbReference>
<dbReference type="InterPro" id="IPR010918">
    <property type="entry name" value="PurM-like_C_dom"/>
</dbReference>
<dbReference type="InterPro" id="IPR036676">
    <property type="entry name" value="PurM-like_C_sf"/>
</dbReference>
<dbReference type="InterPro" id="IPR016188">
    <property type="entry name" value="PurM-like_N"/>
</dbReference>
<dbReference type="InterPro" id="IPR036921">
    <property type="entry name" value="PurM-like_N_sf"/>
</dbReference>
<dbReference type="InterPro" id="IPR004733">
    <property type="entry name" value="PurM_cligase"/>
</dbReference>
<dbReference type="NCBIfam" id="TIGR00878">
    <property type="entry name" value="purM"/>
    <property type="match status" value="1"/>
</dbReference>
<dbReference type="PANTHER" id="PTHR10520:SF12">
    <property type="entry name" value="TRIFUNCTIONAL PURINE BIOSYNTHETIC PROTEIN ADENOSINE-3"/>
    <property type="match status" value="1"/>
</dbReference>
<dbReference type="PANTHER" id="PTHR10520">
    <property type="entry name" value="TRIFUNCTIONAL PURINE BIOSYNTHETIC PROTEIN ADENOSINE-3-RELATED"/>
    <property type="match status" value="1"/>
</dbReference>
<dbReference type="Pfam" id="PF00586">
    <property type="entry name" value="AIRS"/>
    <property type="match status" value="1"/>
</dbReference>
<dbReference type="Pfam" id="PF02769">
    <property type="entry name" value="AIRS_C"/>
    <property type="match status" value="1"/>
</dbReference>
<dbReference type="SUPFAM" id="SSF56042">
    <property type="entry name" value="PurM C-terminal domain-like"/>
    <property type="match status" value="1"/>
</dbReference>
<dbReference type="SUPFAM" id="SSF55326">
    <property type="entry name" value="PurM N-terminal domain-like"/>
    <property type="match status" value="1"/>
</dbReference>
<organism>
    <name type="scientific">Streptococcus pyogenes serotype M12 (strain MGAS2096)</name>
    <dbReference type="NCBI Taxonomy" id="370553"/>
    <lineage>
        <taxon>Bacteria</taxon>
        <taxon>Bacillati</taxon>
        <taxon>Bacillota</taxon>
        <taxon>Bacilli</taxon>
        <taxon>Lactobacillales</taxon>
        <taxon>Streptococcaceae</taxon>
        <taxon>Streptococcus</taxon>
    </lineage>
</organism>
<protein>
    <recommendedName>
        <fullName evidence="1">Phosphoribosylformylglycinamidine cyclo-ligase</fullName>
        <ecNumber evidence="1">6.3.3.1</ecNumber>
    </recommendedName>
    <alternativeName>
        <fullName evidence="1">AIR synthase</fullName>
    </alternativeName>
    <alternativeName>
        <fullName evidence="1">AIRS</fullName>
    </alternativeName>
    <alternativeName>
        <fullName evidence="1">Phosphoribosyl-aminoimidazole synthetase</fullName>
    </alternativeName>
</protein>
<reference key="1">
    <citation type="journal article" date="2006" name="Proc. Natl. Acad. Sci. U.S.A.">
        <title>Molecular genetic anatomy of inter- and intraserotype variation in the human bacterial pathogen group A Streptococcus.</title>
        <authorList>
            <person name="Beres S.B."/>
            <person name="Richter E.W."/>
            <person name="Nagiec M.J."/>
            <person name="Sumby P."/>
            <person name="Porcella S.F."/>
            <person name="DeLeo F.R."/>
            <person name="Musser J.M."/>
        </authorList>
    </citation>
    <scope>NUCLEOTIDE SEQUENCE [LARGE SCALE GENOMIC DNA]</scope>
    <source>
        <strain>MGAS2096</strain>
    </source>
</reference>
<evidence type="ECO:0000255" key="1">
    <source>
        <dbReference type="HAMAP-Rule" id="MF_00741"/>
    </source>
</evidence>